<evidence type="ECO:0000255" key="1">
    <source>
        <dbReference type="HAMAP-Rule" id="MF_00133"/>
    </source>
</evidence>
<dbReference type="EC" id="4.2.1.20" evidence="1"/>
<dbReference type="EMBL" id="CP001120">
    <property type="protein sequence ID" value="ACF70021.1"/>
    <property type="molecule type" value="Genomic_DNA"/>
</dbReference>
<dbReference type="RefSeq" id="WP_000209485.1">
    <property type="nucleotide sequence ID" value="NC_011083.1"/>
</dbReference>
<dbReference type="SMR" id="B4TJK8"/>
<dbReference type="KEGG" id="seh:SeHA_C1916"/>
<dbReference type="HOGENOM" id="CLU_016734_3_1_6"/>
<dbReference type="UniPathway" id="UPA00035">
    <property type="reaction ID" value="UER00044"/>
</dbReference>
<dbReference type="Proteomes" id="UP000001866">
    <property type="component" value="Chromosome"/>
</dbReference>
<dbReference type="GO" id="GO:0005737">
    <property type="term" value="C:cytoplasm"/>
    <property type="evidence" value="ECO:0007669"/>
    <property type="project" value="TreeGrafter"/>
</dbReference>
<dbReference type="GO" id="GO:0004834">
    <property type="term" value="F:tryptophan synthase activity"/>
    <property type="evidence" value="ECO:0007669"/>
    <property type="project" value="UniProtKB-UniRule"/>
</dbReference>
<dbReference type="CDD" id="cd06446">
    <property type="entry name" value="Trp-synth_B"/>
    <property type="match status" value="1"/>
</dbReference>
<dbReference type="FunFam" id="3.40.50.1100:FF:000001">
    <property type="entry name" value="Tryptophan synthase beta chain"/>
    <property type="match status" value="1"/>
</dbReference>
<dbReference type="FunFam" id="3.40.50.1100:FF:000004">
    <property type="entry name" value="Tryptophan synthase beta chain"/>
    <property type="match status" value="1"/>
</dbReference>
<dbReference type="Gene3D" id="3.40.50.1100">
    <property type="match status" value="2"/>
</dbReference>
<dbReference type="HAMAP" id="MF_00133">
    <property type="entry name" value="Trp_synth_beta"/>
    <property type="match status" value="1"/>
</dbReference>
<dbReference type="InterPro" id="IPR006653">
    <property type="entry name" value="Trp_synth_b_CS"/>
</dbReference>
<dbReference type="InterPro" id="IPR006654">
    <property type="entry name" value="Trp_synth_beta"/>
</dbReference>
<dbReference type="InterPro" id="IPR023026">
    <property type="entry name" value="Trp_synth_beta/beta-like"/>
</dbReference>
<dbReference type="InterPro" id="IPR001926">
    <property type="entry name" value="TrpB-like_PALP"/>
</dbReference>
<dbReference type="InterPro" id="IPR036052">
    <property type="entry name" value="TrpB-like_PALP_sf"/>
</dbReference>
<dbReference type="NCBIfam" id="TIGR00263">
    <property type="entry name" value="trpB"/>
    <property type="match status" value="1"/>
</dbReference>
<dbReference type="PANTHER" id="PTHR48077:SF3">
    <property type="entry name" value="TRYPTOPHAN SYNTHASE"/>
    <property type="match status" value="1"/>
</dbReference>
<dbReference type="PANTHER" id="PTHR48077">
    <property type="entry name" value="TRYPTOPHAN SYNTHASE-RELATED"/>
    <property type="match status" value="1"/>
</dbReference>
<dbReference type="Pfam" id="PF00291">
    <property type="entry name" value="PALP"/>
    <property type="match status" value="1"/>
</dbReference>
<dbReference type="PIRSF" id="PIRSF001413">
    <property type="entry name" value="Trp_syn_beta"/>
    <property type="match status" value="1"/>
</dbReference>
<dbReference type="SUPFAM" id="SSF53686">
    <property type="entry name" value="Tryptophan synthase beta subunit-like PLP-dependent enzymes"/>
    <property type="match status" value="1"/>
</dbReference>
<dbReference type="PROSITE" id="PS00168">
    <property type="entry name" value="TRP_SYNTHASE_BETA"/>
    <property type="match status" value="1"/>
</dbReference>
<keyword id="KW-0028">Amino-acid biosynthesis</keyword>
<keyword id="KW-0057">Aromatic amino acid biosynthesis</keyword>
<keyword id="KW-0456">Lyase</keyword>
<keyword id="KW-0663">Pyridoxal phosphate</keyword>
<keyword id="KW-0822">Tryptophan biosynthesis</keyword>
<name>TRPB_SALHS</name>
<organism>
    <name type="scientific">Salmonella heidelberg (strain SL476)</name>
    <dbReference type="NCBI Taxonomy" id="454169"/>
    <lineage>
        <taxon>Bacteria</taxon>
        <taxon>Pseudomonadati</taxon>
        <taxon>Pseudomonadota</taxon>
        <taxon>Gammaproteobacteria</taxon>
        <taxon>Enterobacterales</taxon>
        <taxon>Enterobacteriaceae</taxon>
        <taxon>Salmonella</taxon>
    </lineage>
</organism>
<sequence length="397" mass="42868">MTTLLNPYFGEFGGMYVPQILMPALNQLEEAFVSAQKDPEFQAQFADLLKNYAGRPTALTKCQNITAGTRTTLYLKREDLLHGGAHKTNQVLGQALLAKRMGKSEIIAETGAGQHGVASALASALLGLKCRIYMGAKDVERQSPNVFRMRLMGAEVIPVHSGSATLKDACNEALRDWSGSYETAHYMLGTAAGPHPYPTIVREFQRMIGEETKAQILDKEGRLPDAVIACVGGGSNAIGMFADFINDTSVGLIGVEPGGHGIETGEHGAPLKHGRVGIYFGMKAPMMQTADGQIEESYSISAGLDFPSVGPQHAYLNSIGRADYVSITDDEALEAFKTLCRHEGIIPALESSHALAHALKMMREQPEKEQLLVVNLSGRGDKDIFTVHDILKARGEI</sequence>
<feature type="chain" id="PRO_1000095819" description="Tryptophan synthase beta chain">
    <location>
        <begin position="1"/>
        <end position="397"/>
    </location>
</feature>
<feature type="modified residue" description="N6-(pyridoxal phosphate)lysine" evidence="1">
    <location>
        <position position="87"/>
    </location>
</feature>
<proteinExistence type="inferred from homology"/>
<reference key="1">
    <citation type="journal article" date="2011" name="J. Bacteriol.">
        <title>Comparative genomics of 28 Salmonella enterica isolates: evidence for CRISPR-mediated adaptive sublineage evolution.</title>
        <authorList>
            <person name="Fricke W.F."/>
            <person name="Mammel M.K."/>
            <person name="McDermott P.F."/>
            <person name="Tartera C."/>
            <person name="White D.G."/>
            <person name="Leclerc J.E."/>
            <person name="Ravel J."/>
            <person name="Cebula T.A."/>
        </authorList>
    </citation>
    <scope>NUCLEOTIDE SEQUENCE [LARGE SCALE GENOMIC DNA]</scope>
    <source>
        <strain>SL476</strain>
    </source>
</reference>
<accession>B4TJK8</accession>
<gene>
    <name evidence="1" type="primary">trpB</name>
    <name type="ordered locus">SeHA_C1916</name>
</gene>
<protein>
    <recommendedName>
        <fullName evidence="1">Tryptophan synthase beta chain</fullName>
        <ecNumber evidence="1">4.2.1.20</ecNumber>
    </recommendedName>
</protein>
<comment type="function">
    <text evidence="1">The beta subunit is responsible for the synthesis of L-tryptophan from indole and L-serine.</text>
</comment>
<comment type="catalytic activity">
    <reaction evidence="1">
        <text>(1S,2R)-1-C-(indol-3-yl)glycerol 3-phosphate + L-serine = D-glyceraldehyde 3-phosphate + L-tryptophan + H2O</text>
        <dbReference type="Rhea" id="RHEA:10532"/>
        <dbReference type="ChEBI" id="CHEBI:15377"/>
        <dbReference type="ChEBI" id="CHEBI:33384"/>
        <dbReference type="ChEBI" id="CHEBI:57912"/>
        <dbReference type="ChEBI" id="CHEBI:58866"/>
        <dbReference type="ChEBI" id="CHEBI:59776"/>
        <dbReference type="EC" id="4.2.1.20"/>
    </reaction>
</comment>
<comment type="cofactor">
    <cofactor evidence="1">
        <name>pyridoxal 5'-phosphate</name>
        <dbReference type="ChEBI" id="CHEBI:597326"/>
    </cofactor>
</comment>
<comment type="pathway">
    <text evidence="1">Amino-acid biosynthesis; L-tryptophan biosynthesis; L-tryptophan from chorismate: step 5/5.</text>
</comment>
<comment type="subunit">
    <text evidence="1">Tetramer of two alpha and two beta chains.</text>
</comment>
<comment type="similarity">
    <text evidence="1">Belongs to the TrpB family.</text>
</comment>